<dbReference type="EMBL" id="AF077767">
    <property type="protein sequence ID" value="AAC29426.1"/>
    <property type="molecule type" value="mRNA"/>
</dbReference>
<dbReference type="EMBL" id="AJ005786">
    <property type="protein sequence ID" value="CAA06696.1"/>
    <property type="molecule type" value="mRNA"/>
</dbReference>
<dbReference type="EMBL" id="AJ005787">
    <property type="protein sequence ID" value="CAA06697.1"/>
    <property type="molecule type" value="mRNA"/>
</dbReference>
<dbReference type="RefSeq" id="NP_001079055.1">
    <property type="nucleotide sequence ID" value="NM_001085586.1"/>
</dbReference>
<dbReference type="RefSeq" id="NP_001081756.1">
    <property type="nucleotide sequence ID" value="NM_001088287.1"/>
</dbReference>
<dbReference type="SMR" id="Q9PWR3"/>
<dbReference type="DNASU" id="373586"/>
<dbReference type="GeneID" id="373586"/>
<dbReference type="GeneID" id="398033"/>
<dbReference type="KEGG" id="xla:373586"/>
<dbReference type="KEGG" id="xla:398033"/>
<dbReference type="CTD" id="373586"/>
<dbReference type="CTD" id="398033"/>
<dbReference type="OMA" id="NHTLSAC"/>
<dbReference type="OrthoDB" id="6159439at2759"/>
<dbReference type="Proteomes" id="UP000186698">
    <property type="component" value="Chromosome 1L"/>
</dbReference>
<dbReference type="Proteomes" id="UP000186698">
    <property type="component" value="Chromosome 1S"/>
</dbReference>
<dbReference type="Bgee" id="373586">
    <property type="expression patterns" value="Expressed in muscle tissue and 7 other cell types or tissues"/>
</dbReference>
<dbReference type="GO" id="GO:0005737">
    <property type="term" value="C:cytoplasm"/>
    <property type="evidence" value="ECO:0007669"/>
    <property type="project" value="UniProtKB-SubCell"/>
</dbReference>
<dbReference type="GO" id="GO:0005634">
    <property type="term" value="C:nucleus"/>
    <property type="evidence" value="ECO:0000318"/>
    <property type="project" value="GO_Central"/>
</dbReference>
<dbReference type="GO" id="GO:0000981">
    <property type="term" value="F:DNA-binding transcription factor activity, RNA polymerase II-specific"/>
    <property type="evidence" value="ECO:0000318"/>
    <property type="project" value="GO_Central"/>
</dbReference>
<dbReference type="GO" id="GO:0000978">
    <property type="term" value="F:RNA polymerase II cis-regulatory region sequence-specific DNA binding"/>
    <property type="evidence" value="ECO:0000318"/>
    <property type="project" value="GO_Central"/>
</dbReference>
<dbReference type="GO" id="GO:0009653">
    <property type="term" value="P:anatomical structure morphogenesis"/>
    <property type="evidence" value="ECO:0000318"/>
    <property type="project" value="GO_Central"/>
</dbReference>
<dbReference type="GO" id="GO:0048562">
    <property type="term" value="P:embryonic organ morphogenesis"/>
    <property type="evidence" value="ECO:0000304"/>
    <property type="project" value="AgBase"/>
</dbReference>
<dbReference type="GO" id="GO:0003007">
    <property type="term" value="P:heart morphogenesis"/>
    <property type="evidence" value="ECO:0000304"/>
    <property type="project" value="AgBase"/>
</dbReference>
<dbReference type="GO" id="GO:0006357">
    <property type="term" value="P:regulation of transcription by RNA polymerase II"/>
    <property type="evidence" value="ECO:0000318"/>
    <property type="project" value="GO_Central"/>
</dbReference>
<dbReference type="CDD" id="cd00086">
    <property type="entry name" value="homeodomain"/>
    <property type="match status" value="1"/>
</dbReference>
<dbReference type="FunFam" id="1.10.10.60:FF:000031">
    <property type="entry name" value="Homeobox protein"/>
    <property type="match status" value="1"/>
</dbReference>
<dbReference type="Gene3D" id="1.10.10.60">
    <property type="entry name" value="Homeodomain-like"/>
    <property type="match status" value="1"/>
</dbReference>
<dbReference type="InterPro" id="IPR001356">
    <property type="entry name" value="HD"/>
</dbReference>
<dbReference type="InterPro" id="IPR017970">
    <property type="entry name" value="Homeobox_CS"/>
</dbReference>
<dbReference type="InterPro" id="IPR016233">
    <property type="entry name" value="Homeobox_Pitx/unc30"/>
</dbReference>
<dbReference type="InterPro" id="IPR009057">
    <property type="entry name" value="Homeodomain-like_sf"/>
</dbReference>
<dbReference type="InterPro" id="IPR003654">
    <property type="entry name" value="OAR_dom"/>
</dbReference>
<dbReference type="PANTHER" id="PTHR45882:SF4">
    <property type="entry name" value="PITUITARY HOMEOBOX 2"/>
    <property type="match status" value="1"/>
</dbReference>
<dbReference type="PANTHER" id="PTHR45882">
    <property type="entry name" value="PITUITARY HOMEOBOX HOMOLOG PTX1"/>
    <property type="match status" value="1"/>
</dbReference>
<dbReference type="Pfam" id="PF00046">
    <property type="entry name" value="Homeodomain"/>
    <property type="match status" value="1"/>
</dbReference>
<dbReference type="Pfam" id="PF03826">
    <property type="entry name" value="OAR"/>
    <property type="match status" value="1"/>
</dbReference>
<dbReference type="PIRSF" id="PIRSF000563">
    <property type="entry name" value="Homeobox_protein_Pitx/Unc30"/>
    <property type="match status" value="1"/>
</dbReference>
<dbReference type="SMART" id="SM00389">
    <property type="entry name" value="HOX"/>
    <property type="match status" value="1"/>
</dbReference>
<dbReference type="SUPFAM" id="SSF46689">
    <property type="entry name" value="Homeodomain-like"/>
    <property type="match status" value="1"/>
</dbReference>
<dbReference type="PROSITE" id="PS00027">
    <property type="entry name" value="HOMEOBOX_1"/>
    <property type="match status" value="1"/>
</dbReference>
<dbReference type="PROSITE" id="PS50071">
    <property type="entry name" value="HOMEOBOX_2"/>
    <property type="match status" value="1"/>
</dbReference>
<dbReference type="PROSITE" id="PS50803">
    <property type="entry name" value="OAR"/>
    <property type="match status" value="1"/>
</dbReference>
<keyword id="KW-0025">Alternative splicing</keyword>
<keyword id="KW-0963">Cytoplasm</keyword>
<keyword id="KW-0217">Developmental protein</keyword>
<keyword id="KW-0238">DNA-binding</keyword>
<keyword id="KW-0371">Homeobox</keyword>
<keyword id="KW-0539">Nucleus</keyword>
<keyword id="KW-1185">Reference proteome</keyword>
<reference key="1">
    <citation type="journal article" date="1998" name="Nature">
        <title>Pitx2 determines left-right asymmetry of internal organs in vertebrates.</title>
        <authorList>
            <person name="Ryan A.K."/>
            <person name="Blumberg B."/>
            <person name="Rodriguez-Esteban C."/>
            <person name="Yonei-Tamura S."/>
            <person name="Tamura K."/>
            <person name="Tsukui T."/>
            <person name="de la Pena J."/>
            <person name="Sabbagh W."/>
            <person name="Greenwald J."/>
            <person name="Choe S."/>
            <person name="Norris D.P."/>
            <person name="Robertson E.J."/>
            <person name="Evans R.M."/>
            <person name="Rosenfeld M.G."/>
            <person name="Izpisua-Belmonte J.-C."/>
        </authorList>
    </citation>
    <scope>NUCLEOTIDE SEQUENCE [MRNA] (ISOFORM PTX2A)</scope>
</reference>
<reference key="2">
    <citation type="journal article" date="1999" name="Development">
        <title>The homeobox gene Pitx2: mediator of asymmetric left-right signaling in vertebrate heart and gut looping.</title>
        <authorList>
            <person name="Campione M."/>
            <person name="Steinbeisser H."/>
            <person name="Schweickert A."/>
            <person name="Deissler K."/>
            <person name="van Bebber F."/>
            <person name="Lowe L.A."/>
            <person name="Nowotschin S."/>
            <person name="Viebahn C."/>
            <person name="Haffter P."/>
            <person name="Kuehn M.R."/>
            <person name="Blum M."/>
        </authorList>
    </citation>
    <scope>NUCLEOTIDE SEQUENCE [MRNA] (ISOFORMS PTX2A AND PTX2B)</scope>
    <source>
        <tissue>Embryo</tissue>
    </source>
</reference>
<reference key="3">
    <citation type="journal article" date="2000" name="Mech. Dev.">
        <title>Pitx2 isoforms: involvement of Pitx2c but not Pitx2a or Pitx2b in vertebrate left-right asymmetry.</title>
        <authorList>
            <person name="Schweickert A."/>
            <person name="Campione M."/>
            <person name="Steinbeisser H."/>
            <person name="Blum M."/>
        </authorList>
    </citation>
    <scope>FUNCTION</scope>
</reference>
<reference key="4">
    <citation type="journal article" date="2007" name="Dev. Biol.">
        <title>Anteriorward shifting of asymmetric Xnr1 expression and contralateral communication in left-right specification in Xenopus.</title>
        <authorList>
            <person name="Ohi Y."/>
            <person name="Wright C.V.E."/>
        </authorList>
    </citation>
    <scope>INDUCTION</scope>
</reference>
<comment type="function">
    <text evidence="6">Involved in left-right asymmetry of the developing embryo (PubMed:10585561). May play an important role in development and maintenance of anterior structures. Could play a role at the interface of lateral plate signaling and heart and gut morphogenesis.</text>
</comment>
<comment type="subcellular location">
    <subcellularLocation>
        <location evidence="9">Nucleus</location>
    </subcellularLocation>
    <subcellularLocation>
        <location evidence="1">Cytoplasm</location>
    </subcellularLocation>
</comment>
<comment type="alternative products">
    <event type="alternative splicing"/>
    <isoform>
        <id>Q9PWR3-1</id>
        <name>PTX2A</name>
        <sequence type="displayed"/>
    </isoform>
    <isoform>
        <id>Q9PWR3-2</id>
        <name>PTX2B</name>
        <sequence type="described" ref="VSP_002270"/>
    </isoform>
</comment>
<comment type="developmental stage">
    <text>Asymmetrically expressed in the left lateral plate mesoderm, tubular heart and early gut tube.</text>
</comment>
<comment type="induction">
    <text evidence="7">By nodal/nr-1 in the left lateral plate mesoderm.</text>
</comment>
<comment type="similarity">
    <text evidence="9">Belongs to the paired homeobox family. Bicoid subfamily.</text>
</comment>
<proteinExistence type="evidence at transcript level"/>
<protein>
    <recommendedName>
        <fullName>Pituitary homeobox 2</fullName>
    </recommendedName>
    <alternativeName>
        <fullName>Homeobox protein PITX2</fullName>
    </alternativeName>
    <alternativeName>
        <fullName>Paired-like homeodomain transcription factor 2</fullName>
    </alternativeName>
    <alternativeName>
        <fullName>xPtx2</fullName>
    </alternativeName>
</protein>
<organism>
    <name type="scientific">Xenopus laevis</name>
    <name type="common">African clawed frog</name>
    <dbReference type="NCBI Taxonomy" id="8355"/>
    <lineage>
        <taxon>Eukaryota</taxon>
        <taxon>Metazoa</taxon>
        <taxon>Chordata</taxon>
        <taxon>Craniata</taxon>
        <taxon>Vertebrata</taxon>
        <taxon>Euteleostomi</taxon>
        <taxon>Amphibia</taxon>
        <taxon>Batrachia</taxon>
        <taxon>Anura</taxon>
        <taxon>Pipoidea</taxon>
        <taxon>Pipidae</taxon>
        <taxon>Xenopodinae</taxon>
        <taxon>Xenopus</taxon>
        <taxon>Xenopus</taxon>
    </lineage>
</organism>
<name>PITX2_XENLA</name>
<gene>
    <name type="primary">pitx2</name>
    <name type="synonym">ptx2</name>
</gene>
<evidence type="ECO:0000250" key="1">
    <source>
        <dbReference type="UniProtKB" id="P97474"/>
    </source>
</evidence>
<evidence type="ECO:0000255" key="2"/>
<evidence type="ECO:0000255" key="3">
    <source>
        <dbReference type="PROSITE-ProRule" id="PRU00108"/>
    </source>
</evidence>
<evidence type="ECO:0000255" key="4">
    <source>
        <dbReference type="PROSITE-ProRule" id="PRU00138"/>
    </source>
</evidence>
<evidence type="ECO:0000256" key="5">
    <source>
        <dbReference type="SAM" id="MobiDB-lite"/>
    </source>
</evidence>
<evidence type="ECO:0000269" key="6">
    <source>
    </source>
</evidence>
<evidence type="ECO:0000269" key="7">
    <source>
    </source>
</evidence>
<evidence type="ECO:0000303" key="8">
    <source>
    </source>
</evidence>
<evidence type="ECO:0000305" key="9"/>
<accession>Q9PWR3</accession>
<accession>O93396</accession>
<accession>Q9YHA4</accession>
<sequence length="326" mass="36339">MNSMKEPLHLDHLAGSRVAAASSHHHHHHHHQHQTVTLVSMASSLGQRSGECKSRLEVHTISDTSSPDTADKDKSHQTKNEDSSTDDPSKKKRQRRQRTHFTSQQLQELEATFQRNRYPDMSTREEIAVWTNLTEARVRVWFKNRRAKWRKRERNQQAELCKNGFGPQFNGLMQPYDDMYPSYSYNNWAAKGLTSASLSTKSFPFFNSMNVNPLSSQSMFSSPNSISSMSMSSGMVPSAVTGVPGSGLNSLNNLNNLSNPSLNTAVPTSACPYAPPTPPYVYRDTCNSSLASLRLKAKQHSSFGYATVQTPGSNLSACQYAVDRPV</sequence>
<feature type="chain" id="PRO_0000049228" description="Pituitary homeobox 2">
    <location>
        <begin position="1"/>
        <end position="326"/>
    </location>
</feature>
<feature type="DNA-binding region" description="Homeobox" evidence="3">
    <location>
        <begin position="94"/>
        <end position="153"/>
    </location>
</feature>
<feature type="region of interest" description="Disordered" evidence="5">
    <location>
        <begin position="17"/>
        <end position="37"/>
    </location>
</feature>
<feature type="region of interest" description="Disordered" evidence="5">
    <location>
        <begin position="58"/>
        <end position="106"/>
    </location>
</feature>
<feature type="short sequence motif" description="OAR" evidence="4">
    <location>
        <begin position="288"/>
        <end position="301"/>
    </location>
</feature>
<feature type="short sequence motif" description="Nuclear localization signal" evidence="2">
    <location>
        <begin position="294"/>
        <end position="298"/>
    </location>
</feature>
<feature type="compositionally biased region" description="Basic residues" evidence="5">
    <location>
        <begin position="23"/>
        <end position="33"/>
    </location>
</feature>
<feature type="compositionally biased region" description="Basic and acidic residues" evidence="5">
    <location>
        <begin position="69"/>
        <end position="82"/>
    </location>
</feature>
<feature type="compositionally biased region" description="Basic residues" evidence="5">
    <location>
        <begin position="90"/>
        <end position="99"/>
    </location>
</feature>
<feature type="splice variant" id="VSP_002270" description="In isoform PTX2B." evidence="8">
    <original>MNSMKEPLHLDHLAGSRVAAASSHHHHHHHHQHQTVTLVSMASSLGQRSGECKSRLEVHTISDTSSPDTA</original>
    <variation>MDSNCRKLVTTCVQLGVQPSAVECLFSKESDMKKGGFSAADGTEGNRKETGKRFSRIHQSGS</variation>
    <location>
        <begin position="1"/>
        <end position="70"/>
    </location>
</feature>
<feature type="sequence conflict" description="In Ref. 2; CAA06697." evidence="9" ref="2">
    <original>T</original>
    <variation>S</variation>
    <location>
        <position position="78"/>
    </location>
</feature>
<feature type="sequence conflict" description="In Ref. 2; CAA06697." evidence="9" ref="2">
    <original>S</original>
    <variation>N</variation>
    <location>
        <position position="83"/>
    </location>
</feature>
<feature type="sequence conflict" description="In Ref. 2; CAA06697." evidence="9" ref="2">
    <original>A</original>
    <variation>T</variation>
    <location>
        <position position="158"/>
    </location>
</feature>
<feature type="sequence conflict" description="In Ref. 2; CAA06697." evidence="9" ref="2">
    <original>A</original>
    <variation>T</variation>
    <location>
        <position position="190"/>
    </location>
</feature>
<feature type="sequence conflict" description="In Ref. 2; CAA06697." evidence="9" ref="2">
    <location>
        <begin position="306"/>
        <end position="307"/>
    </location>
</feature>
<feature type="sequence conflict" description="In Ref. 2; CAA06697." evidence="9" ref="2">
    <original>T</original>
    <variation>N</variation>
    <location>
        <position position="310"/>
    </location>
</feature>
<feature type="sequence conflict" description="In Ref. 1; AAC29426." evidence="9" ref="1">
    <original>D</original>
    <variation>N</variation>
    <location>
        <position position="323"/>
    </location>
</feature>